<dbReference type="EC" id="5.4.99.27" evidence="1"/>
<dbReference type="EMBL" id="CP000083">
    <property type="protein sequence ID" value="AAZ24978.1"/>
    <property type="molecule type" value="Genomic_DNA"/>
</dbReference>
<dbReference type="RefSeq" id="WP_011041912.1">
    <property type="nucleotide sequence ID" value="NC_003910.7"/>
</dbReference>
<dbReference type="SMR" id="Q487E7"/>
<dbReference type="STRING" id="167879.CPS_1074"/>
<dbReference type="KEGG" id="cps:CPS_1074"/>
<dbReference type="HOGENOM" id="CLU_005281_4_0_6"/>
<dbReference type="Proteomes" id="UP000000547">
    <property type="component" value="Chromosome"/>
</dbReference>
<dbReference type="GO" id="GO:0005829">
    <property type="term" value="C:cytosol"/>
    <property type="evidence" value="ECO:0007669"/>
    <property type="project" value="TreeGrafter"/>
</dbReference>
<dbReference type="GO" id="GO:0003723">
    <property type="term" value="F:RNA binding"/>
    <property type="evidence" value="ECO:0007669"/>
    <property type="project" value="InterPro"/>
</dbReference>
<dbReference type="GO" id="GO:0160150">
    <property type="term" value="F:tRNA pseudouridine(13) synthase activity"/>
    <property type="evidence" value="ECO:0007669"/>
    <property type="project" value="UniProtKB-EC"/>
</dbReference>
<dbReference type="GO" id="GO:0031119">
    <property type="term" value="P:tRNA pseudouridine synthesis"/>
    <property type="evidence" value="ECO:0007669"/>
    <property type="project" value="UniProtKB-UniRule"/>
</dbReference>
<dbReference type="CDD" id="cd02575">
    <property type="entry name" value="PseudoU_synth_EcTruD"/>
    <property type="match status" value="1"/>
</dbReference>
<dbReference type="Gene3D" id="3.30.2350.20">
    <property type="entry name" value="TruD, catalytic domain"/>
    <property type="match status" value="1"/>
</dbReference>
<dbReference type="Gene3D" id="3.30.2340.10">
    <property type="entry name" value="TruD, insertion domain"/>
    <property type="match status" value="1"/>
</dbReference>
<dbReference type="HAMAP" id="MF_01082">
    <property type="entry name" value="TruD"/>
    <property type="match status" value="1"/>
</dbReference>
<dbReference type="InterPro" id="IPR020103">
    <property type="entry name" value="PsdUridine_synth_cat_dom_sf"/>
</dbReference>
<dbReference type="InterPro" id="IPR001656">
    <property type="entry name" value="PsdUridine_synth_TruD"/>
</dbReference>
<dbReference type="InterPro" id="IPR020119">
    <property type="entry name" value="PsdUridine_synth_TruD_CS"/>
</dbReference>
<dbReference type="InterPro" id="IPR011760">
    <property type="entry name" value="PsdUridine_synth_TruD_insert"/>
</dbReference>
<dbReference type="InterPro" id="IPR042214">
    <property type="entry name" value="TruD_catalytic"/>
</dbReference>
<dbReference type="InterPro" id="IPR043165">
    <property type="entry name" value="TruD_insert_sf"/>
</dbReference>
<dbReference type="InterPro" id="IPR050170">
    <property type="entry name" value="TruD_pseudoU_synthase"/>
</dbReference>
<dbReference type="PANTHER" id="PTHR47811">
    <property type="entry name" value="TRNA PSEUDOURIDINE SYNTHASE D"/>
    <property type="match status" value="1"/>
</dbReference>
<dbReference type="PANTHER" id="PTHR47811:SF1">
    <property type="entry name" value="TRNA PSEUDOURIDINE SYNTHASE D"/>
    <property type="match status" value="1"/>
</dbReference>
<dbReference type="Pfam" id="PF01142">
    <property type="entry name" value="TruD"/>
    <property type="match status" value="2"/>
</dbReference>
<dbReference type="SUPFAM" id="SSF55120">
    <property type="entry name" value="Pseudouridine synthase"/>
    <property type="match status" value="1"/>
</dbReference>
<dbReference type="PROSITE" id="PS50984">
    <property type="entry name" value="TRUD"/>
    <property type="match status" value="1"/>
</dbReference>
<dbReference type="PROSITE" id="PS01268">
    <property type="entry name" value="UPF0024"/>
    <property type="match status" value="1"/>
</dbReference>
<comment type="function">
    <text evidence="1">Responsible for synthesis of pseudouridine from uracil-13 in transfer RNAs.</text>
</comment>
<comment type="catalytic activity">
    <reaction evidence="1">
        <text>uridine(13) in tRNA = pseudouridine(13) in tRNA</text>
        <dbReference type="Rhea" id="RHEA:42540"/>
        <dbReference type="Rhea" id="RHEA-COMP:10105"/>
        <dbReference type="Rhea" id="RHEA-COMP:10106"/>
        <dbReference type="ChEBI" id="CHEBI:65314"/>
        <dbReference type="ChEBI" id="CHEBI:65315"/>
        <dbReference type="EC" id="5.4.99.27"/>
    </reaction>
</comment>
<comment type="similarity">
    <text evidence="1">Belongs to the pseudouridine synthase TruD family.</text>
</comment>
<reference key="1">
    <citation type="journal article" date="2005" name="Proc. Natl. Acad. Sci. U.S.A.">
        <title>The psychrophilic lifestyle as revealed by the genome sequence of Colwellia psychrerythraea 34H through genomic and proteomic analyses.</title>
        <authorList>
            <person name="Methe B.A."/>
            <person name="Nelson K.E."/>
            <person name="Deming J.W."/>
            <person name="Momen B."/>
            <person name="Melamud E."/>
            <person name="Zhang X."/>
            <person name="Moult J."/>
            <person name="Madupu R."/>
            <person name="Nelson W.C."/>
            <person name="Dodson R.J."/>
            <person name="Brinkac L.M."/>
            <person name="Daugherty S.C."/>
            <person name="Durkin A.S."/>
            <person name="DeBoy R.T."/>
            <person name="Kolonay J.F."/>
            <person name="Sullivan S.A."/>
            <person name="Zhou L."/>
            <person name="Davidsen T.M."/>
            <person name="Wu M."/>
            <person name="Huston A.L."/>
            <person name="Lewis M."/>
            <person name="Weaver B."/>
            <person name="Weidman J.F."/>
            <person name="Khouri H."/>
            <person name="Utterback T.R."/>
            <person name="Feldblyum T.V."/>
            <person name="Fraser C.M."/>
        </authorList>
    </citation>
    <scope>NUCLEOTIDE SEQUENCE [LARGE SCALE GENOMIC DNA]</scope>
    <source>
        <strain>34H / ATCC BAA-681</strain>
    </source>
</reference>
<feature type="chain" id="PRO_0000230139" description="tRNA pseudouridine synthase D">
    <location>
        <begin position="1"/>
        <end position="367"/>
    </location>
</feature>
<feature type="domain" description="TRUD" evidence="1">
    <location>
        <begin position="153"/>
        <end position="300"/>
    </location>
</feature>
<feature type="active site" description="Nucleophile" evidence="1">
    <location>
        <position position="78"/>
    </location>
</feature>
<protein>
    <recommendedName>
        <fullName evidence="1">tRNA pseudouridine synthase D</fullName>
        <ecNumber evidence="1">5.4.99.27</ecNumber>
    </recommendedName>
    <alternativeName>
        <fullName evidence="1">tRNA pseudouridine(13) synthase</fullName>
    </alternativeName>
    <alternativeName>
        <fullName evidence="1">tRNA pseudouridylate synthase D</fullName>
    </alternativeName>
    <alternativeName>
        <fullName evidence="1">tRNA-uridine isomerase D</fullName>
    </alternativeName>
</protein>
<sequence length="367" mass="41584">MLIEQAYLHGKPESSGLLRSQISDFQVFEELPFLPCGEGEHLFVHIRKTGANTLFVARELAKYFEVKEQLVSYAGLKDRFAVTEQWFGIHVPGKQEYNLDDLNIEGVEVLSYKRHNKKLRTGALTGNRFELILREVTAIKAFTERWQKIVEQGVPNYFGEQRFGIGGGNIERALSLFSGQKVKDKKKRGMYLSAARSHIFNSVLNERIQQQCFDKVAVGDVLMLAGTQSVFHLDEVDSAIQQRFTDKDVDITAPMWGAGELMTSNAPQVLEQEVATKNLEFCEGLPRFGLKQERRRIRLTVSDTDIELLSAEEDSAQEESNAVKISFFLPAGCYATTVLRELLNYQDMTTRIDKRETAVNSNQQDSA</sequence>
<gene>
    <name evidence="1" type="primary">truD</name>
    <name type="ordered locus">CPS_1074</name>
</gene>
<evidence type="ECO:0000255" key="1">
    <source>
        <dbReference type="HAMAP-Rule" id="MF_01082"/>
    </source>
</evidence>
<proteinExistence type="inferred from homology"/>
<accession>Q487E7</accession>
<keyword id="KW-0413">Isomerase</keyword>
<keyword id="KW-0819">tRNA processing</keyword>
<organism>
    <name type="scientific">Colwellia psychrerythraea (strain 34H / ATCC BAA-681)</name>
    <name type="common">Vibrio psychroerythus</name>
    <dbReference type="NCBI Taxonomy" id="167879"/>
    <lineage>
        <taxon>Bacteria</taxon>
        <taxon>Pseudomonadati</taxon>
        <taxon>Pseudomonadota</taxon>
        <taxon>Gammaproteobacteria</taxon>
        <taxon>Alteromonadales</taxon>
        <taxon>Colwelliaceae</taxon>
        <taxon>Colwellia</taxon>
    </lineage>
</organism>
<name>TRUD_COLP3</name>